<feature type="chain" id="PRO_0000097147" description="Protein RacC">
    <location>
        <begin position="1"/>
        <end position="91"/>
    </location>
</feature>
<reference key="1">
    <citation type="journal article" date="1989" name="J. Bacteriol.">
        <title>Suppression of a frameshift mutation in the recE gene of Escherichia coli K-12 occurs by gene fusion.</title>
        <authorList>
            <person name="Chu C.C."/>
            <person name="Templin A."/>
            <person name="Clark A.J."/>
        </authorList>
    </citation>
    <scope>NUCLEOTIDE SEQUENCE [GENOMIC DNA]</scope>
    <source>
        <strain>K12</strain>
    </source>
</reference>
<reference key="2">
    <citation type="journal article" date="1996" name="DNA Res.">
        <title>A 570-kb DNA sequence of the Escherichia coli K-12 genome corresponding to the 28.0-40.1 min region on the linkage map.</title>
        <authorList>
            <person name="Aiba H."/>
            <person name="Baba T."/>
            <person name="Fujita K."/>
            <person name="Hayashi K."/>
            <person name="Inada T."/>
            <person name="Isono K."/>
            <person name="Itoh T."/>
            <person name="Kasai H."/>
            <person name="Kashimoto K."/>
            <person name="Kimura S."/>
            <person name="Kitakawa M."/>
            <person name="Kitagawa M."/>
            <person name="Makino K."/>
            <person name="Miki T."/>
            <person name="Mizobuchi K."/>
            <person name="Mori H."/>
            <person name="Mori T."/>
            <person name="Motomura K."/>
            <person name="Nakade S."/>
            <person name="Nakamura Y."/>
            <person name="Nashimoto H."/>
            <person name="Nishio Y."/>
            <person name="Oshima T."/>
            <person name="Saito N."/>
            <person name="Sampei G."/>
            <person name="Seki Y."/>
            <person name="Sivasundaram S."/>
            <person name="Tagami H."/>
            <person name="Takeda J."/>
            <person name="Takemoto K."/>
            <person name="Takeuchi Y."/>
            <person name="Wada C."/>
            <person name="Yamamoto Y."/>
            <person name="Horiuchi T."/>
        </authorList>
    </citation>
    <scope>NUCLEOTIDE SEQUENCE [LARGE SCALE GENOMIC DNA]</scope>
    <source>
        <strain>K12 / W3110 / ATCC 27325 / DSM 5911</strain>
    </source>
</reference>
<reference key="3">
    <citation type="journal article" date="1997" name="Science">
        <title>The complete genome sequence of Escherichia coli K-12.</title>
        <authorList>
            <person name="Blattner F.R."/>
            <person name="Plunkett G. III"/>
            <person name="Bloch C.A."/>
            <person name="Perna N.T."/>
            <person name="Burland V."/>
            <person name="Riley M."/>
            <person name="Collado-Vides J."/>
            <person name="Glasner J.D."/>
            <person name="Rode C.K."/>
            <person name="Mayhew G.F."/>
            <person name="Gregor J."/>
            <person name="Davis N.W."/>
            <person name="Kirkpatrick H.A."/>
            <person name="Goeden M.A."/>
            <person name="Rose D.J."/>
            <person name="Mau B."/>
            <person name="Shao Y."/>
        </authorList>
    </citation>
    <scope>NUCLEOTIDE SEQUENCE [LARGE SCALE GENOMIC DNA]</scope>
    <source>
        <strain>K12 / MG1655 / ATCC 47076</strain>
    </source>
</reference>
<reference key="4">
    <citation type="journal article" date="2006" name="Mol. Syst. Biol.">
        <title>Highly accurate genome sequences of Escherichia coli K-12 strains MG1655 and W3110.</title>
        <authorList>
            <person name="Hayashi K."/>
            <person name="Morooka N."/>
            <person name="Yamamoto Y."/>
            <person name="Fujita K."/>
            <person name="Isono K."/>
            <person name="Choi S."/>
            <person name="Ohtsubo E."/>
            <person name="Baba T."/>
            <person name="Wanner B.L."/>
            <person name="Mori H."/>
            <person name="Horiuchi T."/>
        </authorList>
    </citation>
    <scope>NUCLEOTIDE SEQUENCE [LARGE SCALE GENOMIC DNA]</scope>
    <source>
        <strain>K12 / W3110 / ATCC 27325 / DSM 5911</strain>
    </source>
</reference>
<gene>
    <name type="primary">racC</name>
    <name type="ordered locus">b1351</name>
    <name type="ordered locus">JW1345</name>
</gene>
<organism>
    <name type="scientific">Escherichia coli (strain K12)</name>
    <dbReference type="NCBI Taxonomy" id="83333"/>
    <lineage>
        <taxon>Bacteria</taxon>
        <taxon>Pseudomonadati</taxon>
        <taxon>Pseudomonadota</taxon>
        <taxon>Gammaproteobacteria</taxon>
        <taxon>Enterobacterales</taxon>
        <taxon>Enterobacteriaceae</taxon>
        <taxon>Escherichia</taxon>
    </lineage>
</organism>
<keyword id="KW-1185">Reference proteome</keyword>
<name>RACC_ECOLI</name>
<proteinExistence type="predicted"/>
<protein>
    <recommendedName>
        <fullName>Protein RacC</fullName>
    </recommendedName>
</protein>
<dbReference type="EMBL" id="M24905">
    <property type="protein sequence ID" value="AAA03211.1"/>
    <property type="molecule type" value="Unassigned_DNA"/>
</dbReference>
<dbReference type="EMBL" id="U00096">
    <property type="protein sequence ID" value="AAC74433.1"/>
    <property type="molecule type" value="Genomic_DNA"/>
</dbReference>
<dbReference type="EMBL" id="AP009048">
    <property type="protein sequence ID" value="BAA14953.1"/>
    <property type="molecule type" value="Genomic_DNA"/>
</dbReference>
<dbReference type="PIR" id="JS0119">
    <property type="entry name" value="BVECAC"/>
</dbReference>
<dbReference type="RefSeq" id="NP_415867.1">
    <property type="nucleotide sequence ID" value="NC_000913.3"/>
</dbReference>
<dbReference type="RefSeq" id="WP_000632297.1">
    <property type="nucleotide sequence ID" value="NZ_JACEFS010000049.1"/>
</dbReference>
<dbReference type="SMR" id="P15033"/>
<dbReference type="BioGRID" id="4260164">
    <property type="interactions" value="79"/>
</dbReference>
<dbReference type="BioGRID" id="850285">
    <property type="interactions" value="1"/>
</dbReference>
<dbReference type="FunCoup" id="P15033">
    <property type="interactions" value="18"/>
</dbReference>
<dbReference type="IntAct" id="P15033">
    <property type="interactions" value="11"/>
</dbReference>
<dbReference type="STRING" id="511145.b1351"/>
<dbReference type="jPOST" id="P15033"/>
<dbReference type="PaxDb" id="511145-b1351"/>
<dbReference type="EnsemblBacteria" id="AAC74433">
    <property type="protein sequence ID" value="AAC74433"/>
    <property type="gene ID" value="b1351"/>
</dbReference>
<dbReference type="GeneID" id="945920"/>
<dbReference type="KEGG" id="ecj:JW1345"/>
<dbReference type="KEGG" id="eco:b1351"/>
<dbReference type="KEGG" id="ecoc:C3026_07910"/>
<dbReference type="PATRIC" id="fig|511145.12.peg.1410"/>
<dbReference type="EchoBASE" id="EB0806"/>
<dbReference type="eggNOG" id="ENOG5032RI9">
    <property type="taxonomic scope" value="Bacteria"/>
</dbReference>
<dbReference type="HOGENOM" id="CLU_187530_0_0_6"/>
<dbReference type="InParanoid" id="P15033"/>
<dbReference type="OrthoDB" id="6570790at2"/>
<dbReference type="BioCyc" id="EcoCyc:EG10813-MONOMER"/>
<dbReference type="PRO" id="PR:P15033"/>
<dbReference type="Proteomes" id="UP000000625">
    <property type="component" value="Chromosome"/>
</dbReference>
<dbReference type="NCBIfam" id="NF007306">
    <property type="entry name" value="PRK09790.1"/>
    <property type="match status" value="1"/>
</dbReference>
<sequence>MITNYEATVVTTDDIVHEVNLEGKRIGYVIKTENKETPFTVVDIDGPSGNVKTLDEGVKKMCLVHIGKNLPAEKKAEFLATLIAMKLKGEI</sequence>
<accession>P15033</accession>